<keyword id="KW-0010">Activator</keyword>
<keyword id="KW-0963">Cytoplasm</keyword>
<keyword id="KW-0238">DNA-binding</keyword>
<keyword id="KW-0276">Fatty acid metabolism</keyword>
<keyword id="KW-0443">Lipid metabolism</keyword>
<keyword id="KW-0678">Repressor</keyword>
<keyword id="KW-0804">Transcription</keyword>
<keyword id="KW-0805">Transcription regulation</keyword>
<accession>A9MVW4</accession>
<organism>
    <name type="scientific">Salmonella paratyphi B (strain ATCC BAA-1250 / SPB7)</name>
    <dbReference type="NCBI Taxonomy" id="1016998"/>
    <lineage>
        <taxon>Bacteria</taxon>
        <taxon>Pseudomonadati</taxon>
        <taxon>Pseudomonadota</taxon>
        <taxon>Gammaproteobacteria</taxon>
        <taxon>Enterobacterales</taxon>
        <taxon>Enterobacteriaceae</taxon>
        <taxon>Salmonella</taxon>
    </lineage>
</organism>
<protein>
    <recommendedName>
        <fullName evidence="1">Fatty acid metabolism regulator protein</fullName>
    </recommendedName>
</protein>
<sequence length="239" mass="26987">MVIKAQSPAGFAEEYIIESIWNNRFPPGTILPAERELSELIGVTRTTLREVLQRLARDGWLTIQHGKPTKVNNFWETSGLNILETLARLDHESVPQLIDNLLSVRTNISTIFIRTALRQHPDKAQEVLATAHEVADHADAFADLDYNIFRGLAFASGNPIYGLILNGMKGLYTRIGRHYFANPEARSLALGFYHKLSSLCEQGAHDQVYETVRRYGHDSGEIWHRMQKNLPGDLAIQGR</sequence>
<name>FADR_SALPB</name>
<comment type="function">
    <text evidence="1">Multifunctional regulator of fatty acid metabolism.</text>
</comment>
<comment type="subunit">
    <text evidence="1">Homodimer.</text>
</comment>
<comment type="subcellular location">
    <subcellularLocation>
        <location evidence="1">Cytoplasm</location>
    </subcellularLocation>
</comment>
<feature type="chain" id="PRO_1000083186" description="Fatty acid metabolism regulator protein">
    <location>
        <begin position="1"/>
        <end position="239"/>
    </location>
</feature>
<feature type="domain" description="HTH gntR-type" evidence="1">
    <location>
        <begin position="6"/>
        <end position="74"/>
    </location>
</feature>
<feature type="DNA-binding region" description="H-T-H motif" evidence="1">
    <location>
        <begin position="34"/>
        <end position="53"/>
    </location>
</feature>
<reference key="1">
    <citation type="submission" date="2007-11" db="EMBL/GenBank/DDBJ databases">
        <authorList>
            <consortium name="The Salmonella enterica serovar Paratyphi B Genome Sequencing Project"/>
            <person name="McClelland M."/>
            <person name="Sanderson E.K."/>
            <person name="Porwollik S."/>
            <person name="Spieth J."/>
            <person name="Clifton W.S."/>
            <person name="Fulton R."/>
            <person name="Cordes M."/>
            <person name="Wollam A."/>
            <person name="Shah N."/>
            <person name="Pepin K."/>
            <person name="Bhonagiri V."/>
            <person name="Nash W."/>
            <person name="Johnson M."/>
            <person name="Thiruvilangam P."/>
            <person name="Wilson R."/>
        </authorList>
    </citation>
    <scope>NUCLEOTIDE SEQUENCE [LARGE SCALE GENOMIC DNA]</scope>
    <source>
        <strain>ATCC BAA-1250 / SPB7</strain>
    </source>
</reference>
<proteinExistence type="inferred from homology"/>
<dbReference type="EMBL" id="CP000886">
    <property type="protein sequence ID" value="ABX66820.1"/>
    <property type="molecule type" value="Genomic_DNA"/>
</dbReference>
<dbReference type="RefSeq" id="WP_000234826.1">
    <property type="nucleotide sequence ID" value="NC_010102.1"/>
</dbReference>
<dbReference type="SMR" id="A9MVW4"/>
<dbReference type="KEGG" id="spq:SPAB_01413"/>
<dbReference type="PATRIC" id="fig|1016998.12.peg.1332"/>
<dbReference type="HOGENOM" id="CLU_017584_9_4_6"/>
<dbReference type="BioCyc" id="SENT1016998:SPAB_RS05785-MONOMER"/>
<dbReference type="Proteomes" id="UP000008556">
    <property type="component" value="Chromosome"/>
</dbReference>
<dbReference type="GO" id="GO:0005737">
    <property type="term" value="C:cytoplasm"/>
    <property type="evidence" value="ECO:0007669"/>
    <property type="project" value="UniProtKB-SubCell"/>
</dbReference>
<dbReference type="GO" id="GO:0003677">
    <property type="term" value="F:DNA binding"/>
    <property type="evidence" value="ECO:0007669"/>
    <property type="project" value="UniProtKB-KW"/>
</dbReference>
<dbReference type="GO" id="GO:0003700">
    <property type="term" value="F:DNA-binding transcription factor activity"/>
    <property type="evidence" value="ECO:0007669"/>
    <property type="project" value="UniProtKB-UniRule"/>
</dbReference>
<dbReference type="GO" id="GO:0000062">
    <property type="term" value="F:fatty-acyl-CoA binding"/>
    <property type="evidence" value="ECO:0007669"/>
    <property type="project" value="InterPro"/>
</dbReference>
<dbReference type="GO" id="GO:0006631">
    <property type="term" value="P:fatty acid metabolic process"/>
    <property type="evidence" value="ECO:0007669"/>
    <property type="project" value="UniProtKB-KW"/>
</dbReference>
<dbReference type="GO" id="GO:0019217">
    <property type="term" value="P:regulation of fatty acid metabolic process"/>
    <property type="evidence" value="ECO:0007669"/>
    <property type="project" value="UniProtKB-UniRule"/>
</dbReference>
<dbReference type="CDD" id="cd07377">
    <property type="entry name" value="WHTH_GntR"/>
    <property type="match status" value="1"/>
</dbReference>
<dbReference type="FunFam" id="1.10.10.10:FF:000036">
    <property type="entry name" value="Fatty acid metabolism regulator protein"/>
    <property type="match status" value="1"/>
</dbReference>
<dbReference type="FunFam" id="1.20.120.530:FF:000003">
    <property type="entry name" value="Fatty acid metabolism regulator protein"/>
    <property type="match status" value="1"/>
</dbReference>
<dbReference type="Gene3D" id="1.20.120.530">
    <property type="entry name" value="GntR ligand-binding domain-like"/>
    <property type="match status" value="1"/>
</dbReference>
<dbReference type="Gene3D" id="1.10.10.10">
    <property type="entry name" value="Winged helix-like DNA-binding domain superfamily/Winged helix DNA-binding domain"/>
    <property type="match status" value="1"/>
</dbReference>
<dbReference type="HAMAP" id="MF_00696">
    <property type="entry name" value="HTH_FadR"/>
    <property type="match status" value="1"/>
</dbReference>
<dbReference type="InterPro" id="IPR014178">
    <property type="entry name" value="FA-response_TF_FadR"/>
</dbReference>
<dbReference type="InterPro" id="IPR028374">
    <property type="entry name" value="FadR_C"/>
</dbReference>
<dbReference type="InterPro" id="IPR008920">
    <property type="entry name" value="TF_FadR/GntR_C"/>
</dbReference>
<dbReference type="InterPro" id="IPR000524">
    <property type="entry name" value="Tscrpt_reg_HTH_GntR"/>
</dbReference>
<dbReference type="InterPro" id="IPR036388">
    <property type="entry name" value="WH-like_DNA-bd_sf"/>
</dbReference>
<dbReference type="InterPro" id="IPR036390">
    <property type="entry name" value="WH_DNA-bd_sf"/>
</dbReference>
<dbReference type="NCBIfam" id="TIGR02812">
    <property type="entry name" value="fadR_gamma"/>
    <property type="match status" value="1"/>
</dbReference>
<dbReference type="NCBIfam" id="NF003444">
    <property type="entry name" value="PRK04984.1"/>
    <property type="match status" value="1"/>
</dbReference>
<dbReference type="PANTHER" id="PTHR43537:SF52">
    <property type="entry name" value="FATTY ACID METABOLISM REGULATOR PROTEIN"/>
    <property type="match status" value="1"/>
</dbReference>
<dbReference type="PANTHER" id="PTHR43537">
    <property type="entry name" value="TRANSCRIPTIONAL REGULATOR, GNTR FAMILY"/>
    <property type="match status" value="1"/>
</dbReference>
<dbReference type="Pfam" id="PF07840">
    <property type="entry name" value="FadR_C"/>
    <property type="match status" value="1"/>
</dbReference>
<dbReference type="Pfam" id="PF00392">
    <property type="entry name" value="GntR"/>
    <property type="match status" value="1"/>
</dbReference>
<dbReference type="PRINTS" id="PR00035">
    <property type="entry name" value="HTHGNTR"/>
</dbReference>
<dbReference type="SMART" id="SM00345">
    <property type="entry name" value="HTH_GNTR"/>
    <property type="match status" value="1"/>
</dbReference>
<dbReference type="SUPFAM" id="SSF48008">
    <property type="entry name" value="GntR ligand-binding domain-like"/>
    <property type="match status" value="1"/>
</dbReference>
<dbReference type="SUPFAM" id="SSF46785">
    <property type="entry name" value="Winged helix' DNA-binding domain"/>
    <property type="match status" value="1"/>
</dbReference>
<dbReference type="PROSITE" id="PS50949">
    <property type="entry name" value="HTH_GNTR"/>
    <property type="match status" value="1"/>
</dbReference>
<gene>
    <name evidence="1" type="primary">fadR</name>
    <name type="ordered locus">SPAB_01413</name>
</gene>
<evidence type="ECO:0000255" key="1">
    <source>
        <dbReference type="HAMAP-Rule" id="MF_00696"/>
    </source>
</evidence>